<evidence type="ECO:0000255" key="1">
    <source>
        <dbReference type="HAMAP-Rule" id="MF_00242"/>
    </source>
</evidence>
<gene>
    <name evidence="1" type="primary">arcA</name>
    <name type="ordered locus">SAOUHSC_02969</name>
</gene>
<sequence length="411" mass="46915">MTDGPIKVNSEIGALKTVLLKRPGKELENLVPDYLDGLLFDDIPYLEVAQKEHDHFAQVLREEGVEVLYLEKLAAESIENPQVRSEFIDDVLAESKKTILGHEEEIKALFATLSNQELVDKIMSGVRKEEINPKCTHLVEYMDDKYPFYLDPMPNLYFTRDPQASIGHGITINRMFWRARRRESIFIQYIVKHHPRFKDANIPIWLDRDCPFNIEGGDELVLSKDVLAIGVSERTSAQAIEKLARRIFENPQATFKKVVAIEIPTSRTFMHLDTVFTMIDYDKFTMHSAILKAEGNMNIFIIEYDDVNKDIAIKQSSHLKDTLEDVLGIDDIQFIPTGNGDVIDGAREQWNDGSNTLCIRPGVVVTYDRNYVSNDLLRQKGIKVIEISGSELVRGRGGPRCMSQPLFREDI</sequence>
<keyword id="KW-0056">Arginine metabolism</keyword>
<keyword id="KW-0963">Cytoplasm</keyword>
<keyword id="KW-0378">Hydrolase</keyword>
<keyword id="KW-1185">Reference proteome</keyword>
<accession>Q2FUX7</accession>
<feature type="chain" id="PRO_1000005721" description="Arginine deiminase">
    <location>
        <begin position="1"/>
        <end position="411"/>
    </location>
</feature>
<feature type="active site" description="Amidino-cysteine intermediate" evidence="1">
    <location>
        <position position="401"/>
    </location>
</feature>
<comment type="catalytic activity">
    <reaction evidence="1">
        <text>L-arginine + H2O = L-citrulline + NH4(+)</text>
        <dbReference type="Rhea" id="RHEA:19597"/>
        <dbReference type="ChEBI" id="CHEBI:15377"/>
        <dbReference type="ChEBI" id="CHEBI:28938"/>
        <dbReference type="ChEBI" id="CHEBI:32682"/>
        <dbReference type="ChEBI" id="CHEBI:57743"/>
        <dbReference type="EC" id="3.5.3.6"/>
    </reaction>
</comment>
<comment type="pathway">
    <text evidence="1">Amino-acid degradation; L-arginine degradation via ADI pathway; carbamoyl phosphate from L-arginine: step 1/2.</text>
</comment>
<comment type="subcellular location">
    <subcellularLocation>
        <location evidence="1">Cytoplasm</location>
    </subcellularLocation>
</comment>
<comment type="similarity">
    <text evidence="1">Belongs to the arginine deiminase family.</text>
</comment>
<protein>
    <recommendedName>
        <fullName evidence="1">Arginine deiminase</fullName>
        <shortName evidence="1">ADI</shortName>
        <ecNumber evidence="1">3.5.3.6</ecNumber>
    </recommendedName>
    <alternativeName>
        <fullName evidence="1">Arginine dihydrolase</fullName>
        <shortName evidence="1">AD</shortName>
    </alternativeName>
</protein>
<dbReference type="EC" id="3.5.3.6" evidence="1"/>
<dbReference type="EMBL" id="CP000253">
    <property type="protein sequence ID" value="ABD31958.1"/>
    <property type="molecule type" value="Genomic_DNA"/>
</dbReference>
<dbReference type="RefSeq" id="WP_000129411.1">
    <property type="nucleotide sequence ID" value="NZ_LS483365.1"/>
</dbReference>
<dbReference type="RefSeq" id="YP_501419.1">
    <property type="nucleotide sequence ID" value="NC_007795.1"/>
</dbReference>
<dbReference type="SMR" id="Q2FUX7"/>
<dbReference type="STRING" id="93061.SAOUHSC_02969"/>
<dbReference type="PaxDb" id="1280-SAXN108_2906"/>
<dbReference type="GeneID" id="3921670"/>
<dbReference type="KEGG" id="sao:SAOUHSC_02969"/>
<dbReference type="PATRIC" id="fig|93061.5.peg.2678"/>
<dbReference type="eggNOG" id="COG2235">
    <property type="taxonomic scope" value="Bacteria"/>
</dbReference>
<dbReference type="HOGENOM" id="CLU_052662_0_1_9"/>
<dbReference type="OrthoDB" id="9807502at2"/>
<dbReference type="UniPathway" id="UPA00254">
    <property type="reaction ID" value="UER00364"/>
</dbReference>
<dbReference type="PHI-base" id="PHI:10470"/>
<dbReference type="PRO" id="PR:Q2FUX7"/>
<dbReference type="Proteomes" id="UP000008816">
    <property type="component" value="Chromosome"/>
</dbReference>
<dbReference type="GO" id="GO:0005737">
    <property type="term" value="C:cytoplasm"/>
    <property type="evidence" value="ECO:0007669"/>
    <property type="project" value="UniProtKB-SubCell"/>
</dbReference>
<dbReference type="GO" id="GO:0016990">
    <property type="term" value="F:arginine deiminase activity"/>
    <property type="evidence" value="ECO:0000318"/>
    <property type="project" value="GO_Central"/>
</dbReference>
<dbReference type="GO" id="GO:0019547">
    <property type="term" value="P:arginine catabolic process to ornithine"/>
    <property type="evidence" value="ECO:0007669"/>
    <property type="project" value="UniProtKB-UniRule"/>
</dbReference>
<dbReference type="GO" id="GO:0019546">
    <property type="term" value="P:arginine deiminase pathway"/>
    <property type="evidence" value="ECO:0000318"/>
    <property type="project" value="GO_Central"/>
</dbReference>
<dbReference type="FunFam" id="1.10.3930.10:FF:000001">
    <property type="entry name" value="Arginine deiminase"/>
    <property type="match status" value="1"/>
</dbReference>
<dbReference type="Gene3D" id="1.10.3930.10">
    <property type="entry name" value="Arginine deiminase"/>
    <property type="match status" value="1"/>
</dbReference>
<dbReference type="Gene3D" id="3.75.10.10">
    <property type="entry name" value="L-arginine/glycine Amidinotransferase, Chain A"/>
    <property type="match status" value="1"/>
</dbReference>
<dbReference type="HAMAP" id="MF_00242">
    <property type="entry name" value="Arg_deiminase"/>
    <property type="match status" value="1"/>
</dbReference>
<dbReference type="InterPro" id="IPR003876">
    <property type="entry name" value="Arg_deiminase"/>
</dbReference>
<dbReference type="NCBIfam" id="TIGR01078">
    <property type="entry name" value="arcA"/>
    <property type="match status" value="1"/>
</dbReference>
<dbReference type="NCBIfam" id="NF002381">
    <property type="entry name" value="PRK01388.1"/>
    <property type="match status" value="1"/>
</dbReference>
<dbReference type="PANTHER" id="PTHR47271">
    <property type="entry name" value="ARGININE DEIMINASE"/>
    <property type="match status" value="1"/>
</dbReference>
<dbReference type="PANTHER" id="PTHR47271:SF2">
    <property type="entry name" value="ARGININE DEIMINASE"/>
    <property type="match status" value="1"/>
</dbReference>
<dbReference type="Pfam" id="PF02274">
    <property type="entry name" value="ADI"/>
    <property type="match status" value="1"/>
</dbReference>
<dbReference type="PIRSF" id="PIRSF006356">
    <property type="entry name" value="Arg_deiminase"/>
    <property type="match status" value="1"/>
</dbReference>
<dbReference type="PRINTS" id="PR01466">
    <property type="entry name" value="ARGDEIMINASE"/>
</dbReference>
<dbReference type="SUPFAM" id="SSF55909">
    <property type="entry name" value="Pentein"/>
    <property type="match status" value="1"/>
</dbReference>
<organism>
    <name type="scientific">Staphylococcus aureus (strain NCTC 8325 / PS 47)</name>
    <dbReference type="NCBI Taxonomy" id="93061"/>
    <lineage>
        <taxon>Bacteria</taxon>
        <taxon>Bacillati</taxon>
        <taxon>Bacillota</taxon>
        <taxon>Bacilli</taxon>
        <taxon>Bacillales</taxon>
        <taxon>Staphylococcaceae</taxon>
        <taxon>Staphylococcus</taxon>
    </lineage>
</organism>
<proteinExistence type="inferred from homology"/>
<reference key="1">
    <citation type="book" date="2006" name="Gram positive pathogens, 2nd edition">
        <title>The Staphylococcus aureus NCTC 8325 genome.</title>
        <editorList>
            <person name="Fischetti V."/>
            <person name="Novick R."/>
            <person name="Ferretti J."/>
            <person name="Portnoy D."/>
            <person name="Rood J."/>
        </editorList>
        <authorList>
            <person name="Gillaspy A.F."/>
            <person name="Worrell V."/>
            <person name="Orvis J."/>
            <person name="Roe B.A."/>
            <person name="Dyer D.W."/>
            <person name="Iandolo J.J."/>
        </authorList>
    </citation>
    <scope>NUCLEOTIDE SEQUENCE [LARGE SCALE GENOMIC DNA]</scope>
    <source>
        <strain>NCTC 8325 / PS 47</strain>
    </source>
</reference>
<name>ARCA_STAA8</name>